<proteinExistence type="inferred from homology"/>
<protein>
    <recommendedName>
        <fullName evidence="1">Peptide chain release factor 3</fullName>
        <shortName evidence="1">RF-3</shortName>
    </recommendedName>
</protein>
<keyword id="KW-0963">Cytoplasm</keyword>
<keyword id="KW-0342">GTP-binding</keyword>
<keyword id="KW-0547">Nucleotide-binding</keyword>
<keyword id="KW-0648">Protein biosynthesis</keyword>
<sequence>MTLSPYLQEVAKRRTFAIISHPDAGKTTITEKVLLFGQAIQTAGTVKGRGSNQHAKSDWMEMEKQRGISITTSVMQFPYHDCLVNLLDTPGHEDFSEDTYRTLTAVDCCLMVIDAAKGVEDRTRKLMEVTRLRDTPILTFMNKLDRDIRDPMELLDEVENELKIGCAPITWPIGCGKLFKGVYHLYKDETYLYQSGKGHTIQEVRIVKGLNNPDLDAAVGEDLAQQLRDELELVKGASNEFDKELFLAGEITPVFFGTALGNFGVDHMLDGLVEWAPAPMPRQTDTRTVEASEDKFTGFVFKIQANMDPKHRDRVAFMRVVSGKYEKGMKLRQVRTAKDVVISDALTFMAGDRSHVEEAYPGDILGLHNHGTIQIGDTFTQGEMMKFTGIPNFAPELFRRIRLKDPLKQKQLLKGLVQLSEEGAVQVFRPISNNDLIVGAVGVLQFDVVVSRLKSEYNVEAVYESVNVATARWVECADAKKFEEFKRKNESQLALDGGDNLAYIATSMVNLRLAQERYPDVQFHQTREH</sequence>
<organism>
    <name type="scientific">Shigella boydii serotype 4 (strain Sb227)</name>
    <dbReference type="NCBI Taxonomy" id="300268"/>
    <lineage>
        <taxon>Bacteria</taxon>
        <taxon>Pseudomonadati</taxon>
        <taxon>Pseudomonadota</taxon>
        <taxon>Gammaproteobacteria</taxon>
        <taxon>Enterobacterales</taxon>
        <taxon>Enterobacteriaceae</taxon>
        <taxon>Shigella</taxon>
    </lineage>
</organism>
<dbReference type="EMBL" id="CP000036">
    <property type="protein sequence ID" value="ABB68844.1"/>
    <property type="molecule type" value="Genomic_DNA"/>
</dbReference>
<dbReference type="RefSeq" id="WP_000175943.1">
    <property type="nucleotide sequence ID" value="NC_007613.1"/>
</dbReference>
<dbReference type="SMR" id="Q31SW4"/>
<dbReference type="GeneID" id="75169869"/>
<dbReference type="KEGG" id="sbo:SBO_4436"/>
<dbReference type="HOGENOM" id="CLU_002794_2_1_6"/>
<dbReference type="Proteomes" id="UP000007067">
    <property type="component" value="Chromosome"/>
</dbReference>
<dbReference type="GO" id="GO:0005829">
    <property type="term" value="C:cytosol"/>
    <property type="evidence" value="ECO:0007669"/>
    <property type="project" value="TreeGrafter"/>
</dbReference>
<dbReference type="GO" id="GO:0005525">
    <property type="term" value="F:GTP binding"/>
    <property type="evidence" value="ECO:0007669"/>
    <property type="project" value="UniProtKB-UniRule"/>
</dbReference>
<dbReference type="GO" id="GO:0003924">
    <property type="term" value="F:GTPase activity"/>
    <property type="evidence" value="ECO:0007669"/>
    <property type="project" value="InterPro"/>
</dbReference>
<dbReference type="GO" id="GO:0097216">
    <property type="term" value="F:guanosine tetraphosphate binding"/>
    <property type="evidence" value="ECO:0007669"/>
    <property type="project" value="UniProtKB-ARBA"/>
</dbReference>
<dbReference type="GO" id="GO:0016150">
    <property type="term" value="F:translation release factor activity, codon nonspecific"/>
    <property type="evidence" value="ECO:0007669"/>
    <property type="project" value="TreeGrafter"/>
</dbReference>
<dbReference type="GO" id="GO:0016149">
    <property type="term" value="F:translation release factor activity, codon specific"/>
    <property type="evidence" value="ECO:0007669"/>
    <property type="project" value="UniProtKB-UniRule"/>
</dbReference>
<dbReference type="GO" id="GO:0006449">
    <property type="term" value="P:regulation of translational termination"/>
    <property type="evidence" value="ECO:0007669"/>
    <property type="project" value="UniProtKB-UniRule"/>
</dbReference>
<dbReference type="CDD" id="cd04169">
    <property type="entry name" value="RF3"/>
    <property type="match status" value="1"/>
</dbReference>
<dbReference type="CDD" id="cd03689">
    <property type="entry name" value="RF3_II"/>
    <property type="match status" value="1"/>
</dbReference>
<dbReference type="CDD" id="cd16259">
    <property type="entry name" value="RF3_III"/>
    <property type="match status" value="1"/>
</dbReference>
<dbReference type="FunFam" id="2.40.30.10:FF:000040">
    <property type="entry name" value="Peptide chain release factor 3"/>
    <property type="match status" value="1"/>
</dbReference>
<dbReference type="FunFam" id="3.30.70.3280:FF:000001">
    <property type="entry name" value="Peptide chain release factor 3"/>
    <property type="match status" value="1"/>
</dbReference>
<dbReference type="FunFam" id="3.40.50.300:FF:000184">
    <property type="entry name" value="Peptide chain release factor 3"/>
    <property type="match status" value="1"/>
</dbReference>
<dbReference type="FunFam" id="3.40.50.300:FF:000253">
    <property type="entry name" value="Peptide chain release factor 3"/>
    <property type="match status" value="1"/>
</dbReference>
<dbReference type="Gene3D" id="3.40.50.300">
    <property type="entry name" value="P-loop containing nucleotide triphosphate hydrolases"/>
    <property type="match status" value="3"/>
</dbReference>
<dbReference type="Gene3D" id="3.30.70.3280">
    <property type="entry name" value="Peptide chain release factor 3, domain III"/>
    <property type="match status" value="1"/>
</dbReference>
<dbReference type="HAMAP" id="MF_00072">
    <property type="entry name" value="Rel_fac_3"/>
    <property type="match status" value="1"/>
</dbReference>
<dbReference type="InterPro" id="IPR053905">
    <property type="entry name" value="EF-G-like_DII"/>
</dbReference>
<dbReference type="InterPro" id="IPR035647">
    <property type="entry name" value="EFG_III/V"/>
</dbReference>
<dbReference type="InterPro" id="IPR031157">
    <property type="entry name" value="G_TR_CS"/>
</dbReference>
<dbReference type="InterPro" id="IPR027417">
    <property type="entry name" value="P-loop_NTPase"/>
</dbReference>
<dbReference type="InterPro" id="IPR004548">
    <property type="entry name" value="PrfC"/>
</dbReference>
<dbReference type="InterPro" id="IPR032090">
    <property type="entry name" value="RF3_C"/>
</dbReference>
<dbReference type="InterPro" id="IPR038467">
    <property type="entry name" value="RF3_dom_3_sf"/>
</dbReference>
<dbReference type="InterPro" id="IPR041732">
    <property type="entry name" value="RF3_GTP-bd"/>
</dbReference>
<dbReference type="InterPro" id="IPR005225">
    <property type="entry name" value="Small_GTP-bd"/>
</dbReference>
<dbReference type="InterPro" id="IPR000795">
    <property type="entry name" value="T_Tr_GTP-bd_dom"/>
</dbReference>
<dbReference type="InterPro" id="IPR009000">
    <property type="entry name" value="Transl_B-barrel_sf"/>
</dbReference>
<dbReference type="NCBIfam" id="TIGR00503">
    <property type="entry name" value="prfC"/>
    <property type="match status" value="1"/>
</dbReference>
<dbReference type="NCBIfam" id="NF001964">
    <property type="entry name" value="PRK00741.1"/>
    <property type="match status" value="1"/>
</dbReference>
<dbReference type="NCBIfam" id="TIGR00231">
    <property type="entry name" value="small_GTP"/>
    <property type="match status" value="1"/>
</dbReference>
<dbReference type="PANTHER" id="PTHR43556">
    <property type="entry name" value="PEPTIDE CHAIN RELEASE FACTOR RF3"/>
    <property type="match status" value="1"/>
</dbReference>
<dbReference type="PANTHER" id="PTHR43556:SF2">
    <property type="entry name" value="PEPTIDE CHAIN RELEASE FACTOR RF3"/>
    <property type="match status" value="1"/>
</dbReference>
<dbReference type="Pfam" id="PF22042">
    <property type="entry name" value="EF-G_D2"/>
    <property type="match status" value="1"/>
</dbReference>
<dbReference type="Pfam" id="PF00009">
    <property type="entry name" value="GTP_EFTU"/>
    <property type="match status" value="1"/>
</dbReference>
<dbReference type="Pfam" id="PF16658">
    <property type="entry name" value="RF3_C"/>
    <property type="match status" value="1"/>
</dbReference>
<dbReference type="PRINTS" id="PR00315">
    <property type="entry name" value="ELONGATNFCT"/>
</dbReference>
<dbReference type="SUPFAM" id="SSF54980">
    <property type="entry name" value="EF-G C-terminal domain-like"/>
    <property type="match status" value="1"/>
</dbReference>
<dbReference type="SUPFAM" id="SSF52540">
    <property type="entry name" value="P-loop containing nucleoside triphosphate hydrolases"/>
    <property type="match status" value="1"/>
</dbReference>
<dbReference type="SUPFAM" id="SSF50447">
    <property type="entry name" value="Translation proteins"/>
    <property type="match status" value="1"/>
</dbReference>
<dbReference type="PROSITE" id="PS00301">
    <property type="entry name" value="G_TR_1"/>
    <property type="match status" value="1"/>
</dbReference>
<dbReference type="PROSITE" id="PS51722">
    <property type="entry name" value="G_TR_2"/>
    <property type="match status" value="1"/>
</dbReference>
<accession>Q31SW4</accession>
<reference key="1">
    <citation type="journal article" date="2005" name="Nucleic Acids Res.">
        <title>Genome dynamics and diversity of Shigella species, the etiologic agents of bacillary dysentery.</title>
        <authorList>
            <person name="Yang F."/>
            <person name="Yang J."/>
            <person name="Zhang X."/>
            <person name="Chen L."/>
            <person name="Jiang Y."/>
            <person name="Yan Y."/>
            <person name="Tang X."/>
            <person name="Wang J."/>
            <person name="Xiong Z."/>
            <person name="Dong J."/>
            <person name="Xue Y."/>
            <person name="Zhu Y."/>
            <person name="Xu X."/>
            <person name="Sun L."/>
            <person name="Chen S."/>
            <person name="Nie H."/>
            <person name="Peng J."/>
            <person name="Xu J."/>
            <person name="Wang Y."/>
            <person name="Yuan Z."/>
            <person name="Wen Y."/>
            <person name="Yao Z."/>
            <person name="Shen Y."/>
            <person name="Qiang B."/>
            <person name="Hou Y."/>
            <person name="Yu J."/>
            <person name="Jin Q."/>
        </authorList>
    </citation>
    <scope>NUCLEOTIDE SEQUENCE [LARGE SCALE GENOMIC DNA]</scope>
    <source>
        <strain>Sb227</strain>
    </source>
</reference>
<evidence type="ECO:0000255" key="1">
    <source>
        <dbReference type="HAMAP-Rule" id="MF_00072"/>
    </source>
</evidence>
<feature type="chain" id="PRO_0000242207" description="Peptide chain release factor 3">
    <location>
        <begin position="1"/>
        <end position="529"/>
    </location>
</feature>
<feature type="domain" description="tr-type G">
    <location>
        <begin position="11"/>
        <end position="280"/>
    </location>
</feature>
<feature type="binding site" evidence="1">
    <location>
        <begin position="20"/>
        <end position="27"/>
    </location>
    <ligand>
        <name>GTP</name>
        <dbReference type="ChEBI" id="CHEBI:37565"/>
    </ligand>
</feature>
<feature type="binding site" evidence="1">
    <location>
        <begin position="88"/>
        <end position="92"/>
    </location>
    <ligand>
        <name>GTP</name>
        <dbReference type="ChEBI" id="CHEBI:37565"/>
    </ligand>
</feature>
<feature type="binding site" evidence="1">
    <location>
        <begin position="142"/>
        <end position="145"/>
    </location>
    <ligand>
        <name>GTP</name>
        <dbReference type="ChEBI" id="CHEBI:37565"/>
    </ligand>
</feature>
<gene>
    <name evidence="1" type="primary">prfC</name>
    <name type="ordered locus">SBO_4436</name>
</gene>
<comment type="function">
    <text evidence="1">Increases the formation of ribosomal termination complexes and stimulates activities of RF-1 and RF-2. It binds guanine nucleotides and has strong preference for UGA stop codons. It may interact directly with the ribosome. The stimulation of RF-1 and RF-2 is significantly reduced by GTP and GDP, but not by GMP.</text>
</comment>
<comment type="subcellular location">
    <subcellularLocation>
        <location evidence="1">Cytoplasm</location>
    </subcellularLocation>
</comment>
<comment type="similarity">
    <text evidence="1">Belongs to the TRAFAC class translation factor GTPase superfamily. Classic translation factor GTPase family. PrfC subfamily.</text>
</comment>
<name>RF3_SHIBS</name>